<comment type="miscellaneous">
    <text>The strain Nijmegen sequence is shown.</text>
</comment>
<reference key="1">
    <citation type="journal article" date="1985" name="J. Virol.">
        <title>Nucleotide sequence of the genome of Pf3, an IncP-1 plasmid-specific filamentous bacteriophage of Pseudomonas aeruginosa.</title>
        <authorList>
            <person name="Luiten R.G.M."/>
            <person name="Putterman D.G."/>
            <person name="Schoenmakers J.G.G."/>
            <person name="Konings R.N.H."/>
            <person name="Day L.A."/>
        </authorList>
    </citation>
    <scope>NUCLEOTIDE SEQUENCE [GENOMIC DNA]</scope>
    <source>
        <strain>New York</strain>
        <strain>Nijmegen</strain>
    </source>
</reference>
<sequence>MIVHNICHPPRPHCQLKLLCLLNAKAVSYFMVGTDDKIEAEVWVFADESVAVARPGQPVKAYHTIQSVCFH</sequence>
<organismHost>
    <name type="scientific">Pseudomonas aeruginosa</name>
    <dbReference type="NCBI Taxonomy" id="287"/>
</organismHost>
<name>VG071_BPPF3</name>
<protein>
    <recommendedName>
        <fullName>7.9 kDa protein</fullName>
    </recommendedName>
    <alternativeName>
        <fullName>ORF 71</fullName>
    </alternativeName>
</protein>
<organism>
    <name type="scientific">Pseudomonas phage Pf3</name>
    <name type="common">Bacteriophage Pf3</name>
    <dbReference type="NCBI Taxonomy" id="10872"/>
    <lineage>
        <taxon>Viruses</taxon>
        <taxon>Monodnaviria</taxon>
        <taxon>Loebvirae</taxon>
        <taxon>Hofneiviricota</taxon>
        <taxon>Faserviricetes</taxon>
        <taxon>Tubulavirales</taxon>
        <taxon>Inoviridae</taxon>
        <taxon>Tertilicivirus</taxon>
        <taxon>Tertilicivirus Pf3</taxon>
    </lineage>
</organism>
<dbReference type="EMBL" id="M19377">
    <property type="protein sequence ID" value="AAA88393.1"/>
    <property type="molecule type" value="Genomic_DNA"/>
</dbReference>
<dbReference type="EMBL" id="M11912">
    <property type="protein sequence ID" value="AAA88384.1"/>
    <property type="molecule type" value="Genomic_DNA"/>
</dbReference>
<dbReference type="PIR" id="A04236">
    <property type="entry name" value="Z7BP13"/>
</dbReference>
<dbReference type="RefSeq" id="NP_040658.1">
    <property type="nucleotide sequence ID" value="NC_001418.1"/>
</dbReference>
<dbReference type="GeneID" id="1260908"/>
<dbReference type="KEGG" id="vg:1260908"/>
<dbReference type="Proteomes" id="UP000001719">
    <property type="component" value="Genome"/>
</dbReference>
<dbReference type="Proteomes" id="UP000009090">
    <property type="component" value="Genome"/>
</dbReference>
<feature type="chain" id="PRO_0000098213" description="7.9 kDa protein">
    <location>
        <begin position="1"/>
        <end position="71"/>
    </location>
</feature>
<feature type="sequence variant" description="In strain: New York.">
    <original>V</original>
    <variation>A</variation>
    <location>
        <position position="3"/>
    </location>
</feature>
<proteinExistence type="predicted"/>
<keyword id="KW-1185">Reference proteome</keyword>
<accession>P03628</accession>